<evidence type="ECO:0000250" key="1"/>
<evidence type="ECO:0000305" key="2"/>
<comment type="function">
    <text evidence="1">Catalyzes the removal of a penultimate prolyl residue from the N-termini of peptides.</text>
</comment>
<comment type="catalytic activity">
    <reaction>
        <text>Release of any N-terminal amino acid, including proline, that is linked to proline, even from a dipeptide or tripeptide.</text>
        <dbReference type="EC" id="3.4.11.9"/>
    </reaction>
</comment>
<comment type="cofactor">
    <cofactor evidence="1">
        <name>Mn(2+)</name>
        <dbReference type="ChEBI" id="CHEBI:29035"/>
    </cofactor>
    <text evidence="1">Binds 2 manganese ions per subunit.</text>
</comment>
<comment type="similarity">
    <text evidence="2">Belongs to the peptidase M24B family.</text>
</comment>
<dbReference type="EC" id="3.4.11.9"/>
<dbReference type="EMBL" id="EQ963477">
    <property type="protein sequence ID" value="EED51921.1"/>
    <property type="molecule type" value="Genomic_DNA"/>
</dbReference>
<dbReference type="RefSeq" id="XP_002378928.1">
    <property type="nucleotide sequence ID" value="XM_002378887.1"/>
</dbReference>
<dbReference type="SMR" id="B8NEI6"/>
<dbReference type="STRING" id="332952.B8NEI6"/>
<dbReference type="MEROPS" id="M24.009"/>
<dbReference type="EnsemblFungi" id="EED51921">
    <property type="protein sequence ID" value="EED51921"/>
    <property type="gene ID" value="AFLA_061840"/>
</dbReference>
<dbReference type="VEuPathDB" id="FungiDB:AFLA_005238"/>
<dbReference type="eggNOG" id="KOG2413">
    <property type="taxonomic scope" value="Eukaryota"/>
</dbReference>
<dbReference type="HOGENOM" id="CLU_011781_2_2_1"/>
<dbReference type="OMA" id="EPGMILS"/>
<dbReference type="GO" id="GO:0005737">
    <property type="term" value="C:cytoplasm"/>
    <property type="evidence" value="ECO:0007669"/>
    <property type="project" value="UniProtKB-ARBA"/>
</dbReference>
<dbReference type="GO" id="GO:0046872">
    <property type="term" value="F:metal ion binding"/>
    <property type="evidence" value="ECO:0007669"/>
    <property type="project" value="UniProtKB-KW"/>
</dbReference>
<dbReference type="GO" id="GO:0070006">
    <property type="term" value="F:metalloaminopeptidase activity"/>
    <property type="evidence" value="ECO:0007669"/>
    <property type="project" value="InterPro"/>
</dbReference>
<dbReference type="GO" id="GO:0006508">
    <property type="term" value="P:proteolysis"/>
    <property type="evidence" value="ECO:0007669"/>
    <property type="project" value="UniProtKB-KW"/>
</dbReference>
<dbReference type="CDD" id="cd01085">
    <property type="entry name" value="APP"/>
    <property type="match status" value="1"/>
</dbReference>
<dbReference type="FunFam" id="3.40.350.10:FF:000010">
    <property type="entry name" value="Probable Xaa-Pro aminopeptidase P"/>
    <property type="match status" value="1"/>
</dbReference>
<dbReference type="FunFam" id="3.90.230.10:FF:000007">
    <property type="entry name" value="Xaa-Pro aminopeptidase P"/>
    <property type="match status" value="1"/>
</dbReference>
<dbReference type="FunFam" id="3.40.350.10:FF:000003">
    <property type="entry name" value="Xaa-pro aminopeptidase P"/>
    <property type="match status" value="1"/>
</dbReference>
<dbReference type="Gene3D" id="3.90.230.10">
    <property type="entry name" value="Creatinase/methionine aminopeptidase superfamily"/>
    <property type="match status" value="1"/>
</dbReference>
<dbReference type="Gene3D" id="3.40.350.10">
    <property type="entry name" value="Creatinase/prolidase N-terminal domain"/>
    <property type="match status" value="2"/>
</dbReference>
<dbReference type="InterPro" id="IPR029149">
    <property type="entry name" value="Creatin/AminoP/Spt16_N"/>
</dbReference>
<dbReference type="InterPro" id="IPR036005">
    <property type="entry name" value="Creatinase/aminopeptidase-like"/>
</dbReference>
<dbReference type="InterPro" id="IPR000587">
    <property type="entry name" value="Creatinase_N"/>
</dbReference>
<dbReference type="InterPro" id="IPR000994">
    <property type="entry name" value="Pept_M24"/>
</dbReference>
<dbReference type="InterPro" id="IPR033740">
    <property type="entry name" value="Pept_M24B"/>
</dbReference>
<dbReference type="InterPro" id="IPR032416">
    <property type="entry name" value="Peptidase_M24_C"/>
</dbReference>
<dbReference type="InterPro" id="IPR001131">
    <property type="entry name" value="Peptidase_M24B_aminopep-P_CS"/>
</dbReference>
<dbReference type="InterPro" id="IPR050422">
    <property type="entry name" value="X-Pro_aminopeptidase_P"/>
</dbReference>
<dbReference type="PANTHER" id="PTHR43763">
    <property type="entry name" value="XAA-PRO AMINOPEPTIDASE 1"/>
    <property type="match status" value="1"/>
</dbReference>
<dbReference type="PANTHER" id="PTHR43763:SF6">
    <property type="entry name" value="XAA-PRO AMINOPEPTIDASE 1"/>
    <property type="match status" value="1"/>
</dbReference>
<dbReference type="Pfam" id="PF01321">
    <property type="entry name" value="Creatinase_N"/>
    <property type="match status" value="1"/>
</dbReference>
<dbReference type="Pfam" id="PF16189">
    <property type="entry name" value="Creatinase_N_2"/>
    <property type="match status" value="1"/>
</dbReference>
<dbReference type="Pfam" id="PF00557">
    <property type="entry name" value="Peptidase_M24"/>
    <property type="match status" value="1"/>
</dbReference>
<dbReference type="Pfam" id="PF16188">
    <property type="entry name" value="Peptidase_M24_C"/>
    <property type="match status" value="1"/>
</dbReference>
<dbReference type="SUPFAM" id="SSF55920">
    <property type="entry name" value="Creatinase/aminopeptidase"/>
    <property type="match status" value="1"/>
</dbReference>
<dbReference type="SUPFAM" id="SSF53092">
    <property type="entry name" value="Creatinase/prolidase N-terminal domain"/>
    <property type="match status" value="1"/>
</dbReference>
<dbReference type="PROSITE" id="PS00491">
    <property type="entry name" value="PROLINE_PEPTIDASE"/>
    <property type="match status" value="1"/>
</dbReference>
<proteinExistence type="inferred from homology"/>
<protein>
    <recommendedName>
        <fullName>Probable Xaa-Pro aminopeptidase P</fullName>
        <shortName>AMPP</shortName>
        <shortName>Aminopeptidase P</shortName>
        <ecNumber>3.4.11.9</ecNumber>
    </recommendedName>
    <alternativeName>
        <fullName>Aminoacylproline aminopeptidase</fullName>
    </alternativeName>
    <alternativeName>
        <fullName>Prolidase</fullName>
    </alternativeName>
</protein>
<accession>B8NEI6</accession>
<feature type="chain" id="PRO_0000411780" description="Probable Xaa-Pro aminopeptidase P">
    <location>
        <begin position="1"/>
        <end position="654"/>
    </location>
</feature>
<feature type="binding site" evidence="1">
    <location>
        <position position="449"/>
    </location>
    <ligand>
        <name>Mn(2+)</name>
        <dbReference type="ChEBI" id="CHEBI:29035"/>
        <label>2</label>
    </ligand>
</feature>
<feature type="binding site" evidence="1">
    <location>
        <position position="460"/>
    </location>
    <ligand>
        <name>Mn(2+)</name>
        <dbReference type="ChEBI" id="CHEBI:29035"/>
        <label>1</label>
    </ligand>
</feature>
<feature type="binding site" evidence="1">
    <location>
        <position position="460"/>
    </location>
    <ligand>
        <name>Mn(2+)</name>
        <dbReference type="ChEBI" id="CHEBI:29035"/>
        <label>2</label>
    </ligand>
</feature>
<feature type="binding site" evidence="1">
    <location>
        <position position="558"/>
    </location>
    <ligand>
        <name>Mn(2+)</name>
        <dbReference type="ChEBI" id="CHEBI:29035"/>
        <label>1</label>
    </ligand>
</feature>
<feature type="binding site" evidence="1">
    <location>
        <position position="572"/>
    </location>
    <ligand>
        <name>Mn(2+)</name>
        <dbReference type="ChEBI" id="CHEBI:29035"/>
        <label>1</label>
    </ligand>
</feature>
<feature type="binding site" evidence="1">
    <location>
        <position position="572"/>
    </location>
    <ligand>
        <name>Mn(2+)</name>
        <dbReference type="ChEBI" id="CHEBI:29035"/>
        <label>2</label>
    </ligand>
</feature>
<sequence length="654" mass="72826">MLFSRPPIRSPWISAFRSASQLPLSRPRFFSISLSRYSVDMETVNTSERLSRLRELMQEHKVDVYIVPSEDSHQSEYIAPCDGRREFISGFSGSAGTAIVSLSKAALSTDGRYFNQASKQLDNNWQLLKRGVEGFPTWQEWTTEQAEGGKVVGVDPALITASGARSLSETLKKNGSTLVGVQQNLVDLVWGKDRPAPPREKVRVHPEKYAGKSFQEKISELRKELESRKSAGFIVSMLDEIAWLFNLRGSDIPYNPVFFSFATITPTTTELYVDADKLTPEVTAHLGQDVVIKPYDAIYADAKALSETRKQEAGETASKFLLSNKASWALSLSLGGEGQVEEVRSPIGDAKAVKNDVELAGMRACHIRDGAALTEYFAWLENELVNKKSTLDEVDAADKLEQIRSKHDLFVGLSFDTISSTGPNGAVIHYKPEKGSCSIIDPNAIYLCDSGAQYLDGTTDVTRTFHFGQPTELEKKAFTLVLKGVIGLDTAVFPKGTSGFALDVLARQYLWKEGLDYLHGTGHGIGSYLNVHEGPIGVGTRVQYTEVPIAPGNVISDEPGFYEDGKFGIRIENVIMAREVQTTHKFGDKPWLGFEHVTMAPIGRNLIEPSLLSDAELKWVNDYHREIWEKTHHFFENDEYTRSWLQRETQPISK</sequence>
<keyword id="KW-0031">Aminopeptidase</keyword>
<keyword id="KW-0378">Hydrolase</keyword>
<keyword id="KW-0464">Manganese</keyword>
<keyword id="KW-0479">Metal-binding</keyword>
<keyword id="KW-0482">Metalloprotease</keyword>
<keyword id="KW-0645">Protease</keyword>
<reference key="1">
    <citation type="journal article" date="2015" name="Genome Announc.">
        <title>Genome sequence of Aspergillus flavus NRRL 3357, a strain that causes aflatoxin contamination of food and feed.</title>
        <authorList>
            <person name="Nierman W.C."/>
            <person name="Yu J."/>
            <person name="Fedorova-Abrams N.D."/>
            <person name="Losada L."/>
            <person name="Cleveland T.E."/>
            <person name="Bhatnagar D."/>
            <person name="Bennett J.W."/>
            <person name="Dean R."/>
            <person name="Payne G.A."/>
        </authorList>
    </citation>
    <scope>NUCLEOTIDE SEQUENCE [LARGE SCALE GENOMIC DNA]</scope>
    <source>
        <strain>ATCC 200026 / FGSC A1120 / IAM 13836 / NRRL 3357 / JCM 12722 / SRRC 167</strain>
    </source>
</reference>
<organism>
    <name type="scientific">Aspergillus flavus (strain ATCC 200026 / FGSC A1120 / IAM 13836 / NRRL 3357 / JCM 12722 / SRRC 167)</name>
    <dbReference type="NCBI Taxonomy" id="332952"/>
    <lineage>
        <taxon>Eukaryota</taxon>
        <taxon>Fungi</taxon>
        <taxon>Dikarya</taxon>
        <taxon>Ascomycota</taxon>
        <taxon>Pezizomycotina</taxon>
        <taxon>Eurotiomycetes</taxon>
        <taxon>Eurotiomycetidae</taxon>
        <taxon>Eurotiales</taxon>
        <taxon>Aspergillaceae</taxon>
        <taxon>Aspergillus</taxon>
        <taxon>Aspergillus subgen. Circumdati</taxon>
    </lineage>
</organism>
<gene>
    <name type="primary">ampp</name>
    <name type="ORF">AFLA_061840</name>
</gene>
<name>AMPP1_ASPFN</name>